<dbReference type="EMBL" id="BA000018">
    <property type="protein sequence ID" value="BAB41314.1"/>
    <property type="status" value="ALT_INIT"/>
    <property type="molecule type" value="Genomic_DNA"/>
</dbReference>
<dbReference type="PIR" id="G89769">
    <property type="entry name" value="G89769"/>
</dbReference>
<dbReference type="SMR" id="Q7A884"/>
<dbReference type="EnsemblBacteria" id="BAB41314">
    <property type="protein sequence ID" value="BAB41314"/>
    <property type="gene ID" value="BAB41314"/>
</dbReference>
<dbReference type="KEGG" id="sau:SA0095"/>
<dbReference type="HOGENOM" id="CLU_071589_0_1_9"/>
<dbReference type="GO" id="GO:0005886">
    <property type="term" value="C:plasma membrane"/>
    <property type="evidence" value="ECO:0007669"/>
    <property type="project" value="UniProtKB-SubCell"/>
</dbReference>
<dbReference type="Gene3D" id="2.50.20.40">
    <property type="match status" value="1"/>
</dbReference>
<dbReference type="InterPro" id="IPR007595">
    <property type="entry name" value="Csa"/>
</dbReference>
<dbReference type="InterPro" id="IPR038641">
    <property type="entry name" value="Csa_sf"/>
</dbReference>
<dbReference type="NCBIfam" id="TIGR01742">
    <property type="entry name" value="SA_tandem_lipo"/>
    <property type="match status" value="1"/>
</dbReference>
<dbReference type="Pfam" id="PF04507">
    <property type="entry name" value="DUF576"/>
    <property type="match status" value="1"/>
</dbReference>
<dbReference type="PROSITE" id="PS51257">
    <property type="entry name" value="PROKAR_LIPOPROTEIN"/>
    <property type="match status" value="1"/>
</dbReference>
<reference key="1">
    <citation type="journal article" date="2001" name="Lancet">
        <title>Whole genome sequencing of meticillin-resistant Staphylococcus aureus.</title>
        <authorList>
            <person name="Kuroda M."/>
            <person name="Ohta T."/>
            <person name="Uchiyama I."/>
            <person name="Baba T."/>
            <person name="Yuzawa H."/>
            <person name="Kobayashi I."/>
            <person name="Cui L."/>
            <person name="Oguchi A."/>
            <person name="Aoki K."/>
            <person name="Nagai Y."/>
            <person name="Lian J.-Q."/>
            <person name="Ito T."/>
            <person name="Kanamori M."/>
            <person name="Matsumaru H."/>
            <person name="Maruyama A."/>
            <person name="Murakami H."/>
            <person name="Hosoyama A."/>
            <person name="Mizutani-Ui Y."/>
            <person name="Takahashi N.K."/>
            <person name="Sawano T."/>
            <person name="Inoue R."/>
            <person name="Kaito C."/>
            <person name="Sekimizu K."/>
            <person name="Hirakawa H."/>
            <person name="Kuhara S."/>
            <person name="Goto S."/>
            <person name="Yabuzaki J."/>
            <person name="Kanehisa M."/>
            <person name="Yamashita A."/>
            <person name="Oshima K."/>
            <person name="Furuya K."/>
            <person name="Yoshino C."/>
            <person name="Shiba T."/>
            <person name="Hattori M."/>
            <person name="Ogasawara N."/>
            <person name="Hayashi H."/>
            <person name="Hiramatsu K."/>
        </authorList>
    </citation>
    <scope>NUCLEOTIDE SEQUENCE [LARGE SCALE GENOMIC DNA]</scope>
    <source>
        <strain>N315</strain>
    </source>
</reference>
<gene>
    <name type="ordered locus">SA0095</name>
</gene>
<feature type="signal peptide" evidence="1">
    <location>
        <begin position="1"/>
        <end position="23"/>
    </location>
</feature>
<feature type="chain" id="PRO_0000282135" description="Uncharacterized lipoprotein SA0095">
    <location>
        <begin position="24"/>
        <end position="255"/>
    </location>
</feature>
<feature type="lipid moiety-binding region" description="N-palmitoyl cysteine" evidence="1">
    <location>
        <position position="24"/>
    </location>
</feature>
<feature type="lipid moiety-binding region" description="S-diacylglycerol cysteine" evidence="1">
    <location>
        <position position="24"/>
    </location>
</feature>
<comment type="subcellular location">
    <subcellularLocation>
        <location evidence="1">Cell membrane</location>
        <topology evidence="1">Lipid-anchor</topology>
    </subcellularLocation>
</comment>
<comment type="similarity">
    <text evidence="2">Belongs to the staphylococcal tandem lipoprotein family.</text>
</comment>
<comment type="sequence caution" evidence="2">
    <conflict type="erroneous initiation">
        <sequence resource="EMBL-CDS" id="BAB41314"/>
    </conflict>
</comment>
<sequence length="255" mass="29700">MKRLNKLVLGISFLFLVISITAGCGMGKEAEIKKSFEKTMSMYPIKNLEDLYDKEGYRDDQFDKNDKGTWIVNSQMAIQNKGEPMKSKGMVLYMNRNTRTTNGYYYVNVIKGEDKGKHQDNEKRYPVKMVDNKIILTKEIKDENIKIEIENFKFFVQYGNFKDLENYKDGDISYNPEVPSYSAKYQLTNDDYNVKQLRKRYDIPTNKAPKLLLKGTGNLKGSSVGYKDIEFTFVEKKEENIYFSDGLIFKPSEDK</sequence>
<proteinExistence type="inferred from homology"/>
<name>Y095_STAAN</name>
<evidence type="ECO:0000255" key="1">
    <source>
        <dbReference type="PROSITE-ProRule" id="PRU00303"/>
    </source>
</evidence>
<evidence type="ECO:0000305" key="2"/>
<organism>
    <name type="scientific">Staphylococcus aureus (strain N315)</name>
    <dbReference type="NCBI Taxonomy" id="158879"/>
    <lineage>
        <taxon>Bacteria</taxon>
        <taxon>Bacillati</taxon>
        <taxon>Bacillota</taxon>
        <taxon>Bacilli</taxon>
        <taxon>Bacillales</taxon>
        <taxon>Staphylococcaceae</taxon>
        <taxon>Staphylococcus</taxon>
    </lineage>
</organism>
<accession>Q7A884</accession>
<protein>
    <recommendedName>
        <fullName>Uncharacterized lipoprotein SA0095</fullName>
    </recommendedName>
</protein>
<keyword id="KW-1003">Cell membrane</keyword>
<keyword id="KW-0449">Lipoprotein</keyword>
<keyword id="KW-0472">Membrane</keyword>
<keyword id="KW-0564">Palmitate</keyword>
<keyword id="KW-0732">Signal</keyword>